<organism>
    <name type="scientific">Candida albicans (strain SC5314 / ATCC MYA-2876)</name>
    <name type="common">Yeast</name>
    <dbReference type="NCBI Taxonomy" id="237561"/>
    <lineage>
        <taxon>Eukaryota</taxon>
        <taxon>Fungi</taxon>
        <taxon>Dikarya</taxon>
        <taxon>Ascomycota</taxon>
        <taxon>Saccharomycotina</taxon>
        <taxon>Pichiomycetes</taxon>
        <taxon>Debaryomycetaceae</taxon>
        <taxon>Candida/Lodderomyces clade</taxon>
        <taxon>Candida</taxon>
    </lineage>
</organism>
<reference key="1">
    <citation type="journal article" date="2001" name="J. Bacteriol.">
        <title>Infrequent genetic exchange and recombination in the mitochondrial genome of Candida albicans.</title>
        <authorList>
            <person name="Anderson J.B."/>
            <person name="Wickens C."/>
            <person name="Khan M."/>
            <person name="Cowen L.E."/>
            <person name="Federspiel N.A."/>
            <person name="Jones T."/>
            <person name="Kohn L.M."/>
        </authorList>
    </citation>
    <scope>NUCLEOTIDE SEQUENCE [LARGE SCALE GENOMIC DNA]</scope>
    <source>
        <strain>SC5314 / ATCC MYA-2876</strain>
    </source>
</reference>
<accession>Q9B8D6</accession>
<proteinExistence type="inferred from homology"/>
<protein>
    <recommendedName>
        <fullName>NADH-ubiquinone oxidoreductase chain 1</fullName>
        <ecNumber>7.1.1.2</ecNumber>
    </recommendedName>
    <alternativeName>
        <fullName>NADH dehydrogenase subunit 1</fullName>
    </alternativeName>
</protein>
<evidence type="ECO:0000250" key="1"/>
<evidence type="ECO:0000255" key="2"/>
<evidence type="ECO:0000305" key="3"/>
<evidence type="ECO:0000312" key="4">
    <source>
        <dbReference type="CGD" id="CAL0000201667"/>
    </source>
</evidence>
<geneLocation type="mitochondrion"/>
<gene>
    <name type="primary">NAD1</name>
    <name evidence="4" type="ordered locus">CM_00060W</name>
    <name type="ORF">CaalfMp03</name>
</gene>
<dbReference type="EC" id="7.1.1.2"/>
<dbReference type="EMBL" id="AF285261">
    <property type="protein sequence ID" value="AAG59589.2"/>
    <property type="molecule type" value="Genomic_DNA"/>
</dbReference>
<dbReference type="RefSeq" id="NP_075032.2">
    <property type="nucleotide sequence ID" value="NC_002653.1"/>
</dbReference>
<dbReference type="SMR" id="Q9B8D6"/>
<dbReference type="STRING" id="237561.Q9B8D6"/>
<dbReference type="EnsemblFungi" id="CM_00060W-T">
    <property type="protein sequence ID" value="CM_00060W-T-p1"/>
    <property type="gene ID" value="CM_00060W"/>
</dbReference>
<dbReference type="GeneID" id="802557"/>
<dbReference type="KEGG" id="cal:CaalfMp03"/>
<dbReference type="CGD" id="CAL0000201667">
    <property type="gene designation" value="NAD1"/>
</dbReference>
<dbReference type="VEuPathDB" id="FungiDB:CM_00060W"/>
<dbReference type="InParanoid" id="Q9B8D6"/>
<dbReference type="Proteomes" id="UP000000559">
    <property type="component" value="Mitochondrion"/>
</dbReference>
<dbReference type="GO" id="GO:0005743">
    <property type="term" value="C:mitochondrial inner membrane"/>
    <property type="evidence" value="ECO:0007669"/>
    <property type="project" value="UniProtKB-SubCell"/>
</dbReference>
<dbReference type="GO" id="GO:0045271">
    <property type="term" value="C:respiratory chain complex I"/>
    <property type="evidence" value="ECO:0000250"/>
    <property type="project" value="CGD"/>
</dbReference>
<dbReference type="GO" id="GO:0008137">
    <property type="term" value="F:NADH dehydrogenase (ubiquinone) activity"/>
    <property type="evidence" value="ECO:0000250"/>
    <property type="project" value="CGD"/>
</dbReference>
<dbReference type="GO" id="GO:0009060">
    <property type="term" value="P:aerobic respiration"/>
    <property type="evidence" value="ECO:0000318"/>
    <property type="project" value="GO_Central"/>
</dbReference>
<dbReference type="GO" id="GO:0006120">
    <property type="term" value="P:mitochondrial electron transport, NADH to ubiquinone"/>
    <property type="evidence" value="ECO:0000250"/>
    <property type="project" value="CGD"/>
</dbReference>
<dbReference type="HAMAP" id="MF_01350">
    <property type="entry name" value="NDH1_NuoH"/>
    <property type="match status" value="1"/>
</dbReference>
<dbReference type="InterPro" id="IPR001694">
    <property type="entry name" value="NADH_UbQ_OxRdtase_su1/FPO"/>
</dbReference>
<dbReference type="InterPro" id="IPR018086">
    <property type="entry name" value="NADH_UbQ_OxRdtase_su1_CS"/>
</dbReference>
<dbReference type="PANTHER" id="PTHR11432">
    <property type="entry name" value="NADH DEHYDROGENASE SUBUNIT 1"/>
    <property type="match status" value="1"/>
</dbReference>
<dbReference type="PANTHER" id="PTHR11432:SF3">
    <property type="entry name" value="NADH-UBIQUINONE OXIDOREDUCTASE CHAIN 1"/>
    <property type="match status" value="1"/>
</dbReference>
<dbReference type="Pfam" id="PF00146">
    <property type="entry name" value="NADHdh"/>
    <property type="match status" value="1"/>
</dbReference>
<dbReference type="PROSITE" id="PS00667">
    <property type="entry name" value="COMPLEX1_ND1_1"/>
    <property type="match status" value="1"/>
</dbReference>
<dbReference type="PROSITE" id="PS00668">
    <property type="entry name" value="COMPLEX1_ND1_2"/>
    <property type="match status" value="1"/>
</dbReference>
<keyword id="KW-0249">Electron transport</keyword>
<keyword id="KW-0472">Membrane</keyword>
<keyword id="KW-0496">Mitochondrion</keyword>
<keyword id="KW-0999">Mitochondrion inner membrane</keyword>
<keyword id="KW-0520">NAD</keyword>
<keyword id="KW-1185">Reference proteome</keyword>
<keyword id="KW-0679">Respiratory chain</keyword>
<keyword id="KW-1278">Translocase</keyword>
<keyword id="KW-0812">Transmembrane</keyword>
<keyword id="KW-1133">Transmembrane helix</keyword>
<keyword id="KW-0813">Transport</keyword>
<keyword id="KW-0830">Ubiquinone</keyword>
<sequence>MQYIELLIMFLSVLLAVAFLTVAERKTLGYMQRRVGPNAVGYYGILMAIADAAKLLLKEIVVPTHADKLILFVSPMISLISALLCWSVIPFAPGVTIYDSNYGFILTLAISSVGVFGTLLAGWSANSKYSLLGSIRSTAQLISYELVLTTIILLCILIGGTMNVSKYIEIQQAIWYGIPLLPLAIIFFIGCVAECARPPFDNVEAESELVSGHMTEYSSSIFVLFFLSEYASILFLSTLTAILFMGGGTGIILGLKANLFAFTYIWVRATLPRVRYDKLINLCWMIFLPILFGSAIAVPAYLYALDAIIILYRPGGL</sequence>
<feature type="chain" id="PRO_0000356875" description="NADH-ubiquinone oxidoreductase chain 1">
    <location>
        <begin position="1"/>
        <end position="317"/>
    </location>
</feature>
<feature type="transmembrane region" description="Helical" evidence="2">
    <location>
        <begin position="3"/>
        <end position="23"/>
    </location>
</feature>
<feature type="transmembrane region" description="Helical" evidence="2">
    <location>
        <begin position="37"/>
        <end position="57"/>
    </location>
</feature>
<feature type="transmembrane region" description="Helical" evidence="2">
    <location>
        <begin position="69"/>
        <end position="89"/>
    </location>
</feature>
<feature type="transmembrane region" description="Helical" evidence="2">
    <location>
        <begin position="103"/>
        <end position="123"/>
    </location>
</feature>
<feature type="transmembrane region" description="Helical" evidence="2">
    <location>
        <begin position="141"/>
        <end position="161"/>
    </location>
</feature>
<feature type="transmembrane region" description="Helical" evidence="2">
    <location>
        <begin position="173"/>
        <end position="193"/>
    </location>
</feature>
<feature type="transmembrane region" description="Helical" evidence="2">
    <location>
        <begin position="207"/>
        <end position="227"/>
    </location>
</feature>
<feature type="transmembrane region" description="Helical" evidence="2">
    <location>
        <begin position="247"/>
        <end position="267"/>
    </location>
</feature>
<feature type="transmembrane region" description="Helical" evidence="2">
    <location>
        <begin position="282"/>
        <end position="302"/>
    </location>
</feature>
<comment type="function">
    <text evidence="1">Core subunit of the mitochondrial membrane respiratory chain NADH dehydrogenase (Complex I) that is believed to belong to the minimal assembly required for catalysis. Complex I functions in the transfer of electrons from NADH to the respiratory chain. The immediate electron acceptor for the enzyme is believed to be ubiquinone (By similarity).</text>
</comment>
<comment type="catalytic activity">
    <reaction>
        <text>a ubiquinone + NADH + 5 H(+)(in) = a ubiquinol + NAD(+) + 4 H(+)(out)</text>
        <dbReference type="Rhea" id="RHEA:29091"/>
        <dbReference type="Rhea" id="RHEA-COMP:9565"/>
        <dbReference type="Rhea" id="RHEA-COMP:9566"/>
        <dbReference type="ChEBI" id="CHEBI:15378"/>
        <dbReference type="ChEBI" id="CHEBI:16389"/>
        <dbReference type="ChEBI" id="CHEBI:17976"/>
        <dbReference type="ChEBI" id="CHEBI:57540"/>
        <dbReference type="ChEBI" id="CHEBI:57945"/>
        <dbReference type="EC" id="7.1.1.2"/>
    </reaction>
</comment>
<comment type="subcellular location">
    <subcellularLocation>
        <location evidence="1">Mitochondrion inner membrane</location>
        <topology evidence="1">Multi-pass membrane protein</topology>
    </subcellularLocation>
</comment>
<comment type="similarity">
    <text evidence="3">Belongs to the complex I subunit 1 family.</text>
</comment>
<name>NU1M_CANAL</name>